<keyword id="KW-0067">ATP-binding</keyword>
<keyword id="KW-0143">Chaperone</keyword>
<keyword id="KW-0963">Cytoplasm</keyword>
<keyword id="KW-0547">Nucleotide-binding</keyword>
<keyword id="KW-1185">Reference proteome</keyword>
<keyword id="KW-0346">Stress response</keyword>
<protein>
    <recommendedName>
        <fullName evidence="1">Chaperone protein HtpG</fullName>
    </recommendedName>
    <alternativeName>
        <fullName evidence="1">Heat shock protein HtpG</fullName>
    </alternativeName>
    <alternativeName>
        <fullName evidence="1">High temperature protein G</fullName>
    </alternativeName>
</protein>
<sequence>MTAPHETMSFQAEVKQLLHLMIHSLYSNKEIFLRELVSNASDATDKLRFEAIANPSLLENDADLAIRIEADAKARTLTITDNGIGMSRDEAIHNLGTIARSGTKEFFQQLSGDQQKDAALIGQFGVGFYSAFIVADKVTVETRRAGLGAEDAVRWESTGDGEFTIDAIARNERGTTITLHLREGEDDFLSAWRLKGIIQKYSDHISLPIRMPKEVWDAESSTYQRTAEWESVNQASALWTRAKSDITDEQYTAFYQHIAHDNEAPLAWTHNRVEGRSEYTQLLYIPARAPFDLWDRNHKAGLKLYVKRVFIMDDADQLLPGYLRWVKGVVDSADLPLNVSRELLQESRDVKAIREGCTKRVLSMLETLADSEEEAERAKYTTFWQQFGQALKEGIGEDQANLERVAKLLRFASTHNDTAEQNVALAAYVGRMKEGQDKIYYVTADTWSAAKNSPHLEVFRKKGIEVLLLTDRVDEWMLSFLREFDGKELVSVARGDLDLGKLADEAEKAEQEKAEADWKDVVDRAKTVLDGKAKDVRVTLRLTASASCLVSDEGDMSGYLQRLLKQAGQKAPDAQPILELNPEHALVQKLRDLPEGDAFSDRVQVLFDQALLAEGGMLDDPAAYVQRVNKLLA</sequence>
<reference key="1">
    <citation type="journal article" date="2006" name="Nat. Biotechnol.">
        <title>Genome sequence of the bioplastic-producing 'Knallgas' bacterium Ralstonia eutropha H16.</title>
        <authorList>
            <person name="Pohlmann A."/>
            <person name="Fricke W.F."/>
            <person name="Reinecke F."/>
            <person name="Kusian B."/>
            <person name="Liesegang H."/>
            <person name="Cramm R."/>
            <person name="Eitinger T."/>
            <person name="Ewering C."/>
            <person name="Poetter M."/>
            <person name="Schwartz E."/>
            <person name="Strittmatter A."/>
            <person name="Voss I."/>
            <person name="Gottschalk G."/>
            <person name="Steinbuechel A."/>
            <person name="Friedrich B."/>
            <person name="Bowien B."/>
        </authorList>
    </citation>
    <scope>NUCLEOTIDE SEQUENCE [LARGE SCALE GENOMIC DNA]</scope>
    <source>
        <strain>ATCC 17699 / DSM 428 / KCTC 22496 / NCIMB 10442 / H16 / Stanier 337</strain>
    </source>
</reference>
<name>HTPG_CUPNH</name>
<accession>Q0K8D7</accession>
<organism>
    <name type="scientific">Cupriavidus necator (strain ATCC 17699 / DSM 428 / KCTC 22496 / NCIMB 10442 / H16 / Stanier 337)</name>
    <name type="common">Ralstonia eutropha</name>
    <dbReference type="NCBI Taxonomy" id="381666"/>
    <lineage>
        <taxon>Bacteria</taxon>
        <taxon>Pseudomonadati</taxon>
        <taxon>Pseudomonadota</taxon>
        <taxon>Betaproteobacteria</taxon>
        <taxon>Burkholderiales</taxon>
        <taxon>Burkholderiaceae</taxon>
        <taxon>Cupriavidus</taxon>
    </lineage>
</organism>
<proteinExistence type="inferred from homology"/>
<gene>
    <name evidence="1" type="primary">htpG</name>
    <name type="ordered locus">H16_A2654</name>
</gene>
<evidence type="ECO:0000255" key="1">
    <source>
        <dbReference type="HAMAP-Rule" id="MF_00505"/>
    </source>
</evidence>
<comment type="function">
    <text evidence="1">Molecular chaperone. Has ATPase activity.</text>
</comment>
<comment type="subunit">
    <text evidence="1">Homodimer.</text>
</comment>
<comment type="subcellular location">
    <subcellularLocation>
        <location evidence="1">Cytoplasm</location>
    </subcellularLocation>
</comment>
<comment type="similarity">
    <text evidence="1">Belongs to the heat shock protein 90 family.</text>
</comment>
<dbReference type="EMBL" id="AM260479">
    <property type="protein sequence ID" value="CAJ93734.1"/>
    <property type="molecule type" value="Genomic_DNA"/>
</dbReference>
<dbReference type="RefSeq" id="WP_010813553.1">
    <property type="nucleotide sequence ID" value="NZ_CP039287.1"/>
</dbReference>
<dbReference type="SMR" id="Q0K8D7"/>
<dbReference type="STRING" id="381666.H16_A2654"/>
<dbReference type="KEGG" id="reh:H16_A2654"/>
<dbReference type="eggNOG" id="COG0326">
    <property type="taxonomic scope" value="Bacteria"/>
</dbReference>
<dbReference type="HOGENOM" id="CLU_006684_3_0_4"/>
<dbReference type="OrthoDB" id="9802640at2"/>
<dbReference type="Proteomes" id="UP000008210">
    <property type="component" value="Chromosome 1"/>
</dbReference>
<dbReference type="GO" id="GO:0005737">
    <property type="term" value="C:cytoplasm"/>
    <property type="evidence" value="ECO:0007669"/>
    <property type="project" value="UniProtKB-SubCell"/>
</dbReference>
<dbReference type="GO" id="GO:0005524">
    <property type="term" value="F:ATP binding"/>
    <property type="evidence" value="ECO:0007669"/>
    <property type="project" value="UniProtKB-UniRule"/>
</dbReference>
<dbReference type="GO" id="GO:0016887">
    <property type="term" value="F:ATP hydrolysis activity"/>
    <property type="evidence" value="ECO:0007669"/>
    <property type="project" value="InterPro"/>
</dbReference>
<dbReference type="GO" id="GO:0140662">
    <property type="term" value="F:ATP-dependent protein folding chaperone"/>
    <property type="evidence" value="ECO:0007669"/>
    <property type="project" value="InterPro"/>
</dbReference>
<dbReference type="GO" id="GO:0051082">
    <property type="term" value="F:unfolded protein binding"/>
    <property type="evidence" value="ECO:0007669"/>
    <property type="project" value="UniProtKB-UniRule"/>
</dbReference>
<dbReference type="CDD" id="cd16927">
    <property type="entry name" value="HATPase_Hsp90-like"/>
    <property type="match status" value="1"/>
</dbReference>
<dbReference type="FunFam" id="3.30.230.80:FF:000002">
    <property type="entry name" value="Molecular chaperone HtpG"/>
    <property type="match status" value="1"/>
</dbReference>
<dbReference type="FunFam" id="3.30.565.10:FF:000009">
    <property type="entry name" value="Molecular chaperone HtpG"/>
    <property type="match status" value="1"/>
</dbReference>
<dbReference type="Gene3D" id="3.30.230.80">
    <property type="match status" value="1"/>
</dbReference>
<dbReference type="Gene3D" id="3.40.50.11260">
    <property type="match status" value="1"/>
</dbReference>
<dbReference type="Gene3D" id="1.20.120.790">
    <property type="entry name" value="Heat shock protein 90, C-terminal domain"/>
    <property type="match status" value="1"/>
</dbReference>
<dbReference type="Gene3D" id="3.30.565.10">
    <property type="entry name" value="Histidine kinase-like ATPase, C-terminal domain"/>
    <property type="match status" value="1"/>
</dbReference>
<dbReference type="HAMAP" id="MF_00505">
    <property type="entry name" value="HSP90"/>
    <property type="match status" value="1"/>
</dbReference>
<dbReference type="InterPro" id="IPR036890">
    <property type="entry name" value="HATPase_C_sf"/>
</dbReference>
<dbReference type="InterPro" id="IPR019805">
    <property type="entry name" value="Heat_shock_protein_90_CS"/>
</dbReference>
<dbReference type="InterPro" id="IPR037196">
    <property type="entry name" value="HSP90_C"/>
</dbReference>
<dbReference type="InterPro" id="IPR001404">
    <property type="entry name" value="Hsp90_fam"/>
</dbReference>
<dbReference type="InterPro" id="IPR020575">
    <property type="entry name" value="Hsp90_N"/>
</dbReference>
<dbReference type="InterPro" id="IPR020568">
    <property type="entry name" value="Ribosomal_Su5_D2-typ_SF"/>
</dbReference>
<dbReference type="NCBIfam" id="NF003555">
    <property type="entry name" value="PRK05218.1"/>
    <property type="match status" value="1"/>
</dbReference>
<dbReference type="PANTHER" id="PTHR11528">
    <property type="entry name" value="HEAT SHOCK PROTEIN 90 FAMILY MEMBER"/>
    <property type="match status" value="1"/>
</dbReference>
<dbReference type="Pfam" id="PF13589">
    <property type="entry name" value="HATPase_c_3"/>
    <property type="match status" value="1"/>
</dbReference>
<dbReference type="Pfam" id="PF00183">
    <property type="entry name" value="HSP90"/>
    <property type="match status" value="1"/>
</dbReference>
<dbReference type="PIRSF" id="PIRSF002583">
    <property type="entry name" value="Hsp90"/>
    <property type="match status" value="1"/>
</dbReference>
<dbReference type="PRINTS" id="PR00775">
    <property type="entry name" value="HEATSHOCK90"/>
</dbReference>
<dbReference type="SMART" id="SM00387">
    <property type="entry name" value="HATPase_c"/>
    <property type="match status" value="1"/>
</dbReference>
<dbReference type="SUPFAM" id="SSF55874">
    <property type="entry name" value="ATPase domain of HSP90 chaperone/DNA topoisomerase II/histidine kinase"/>
    <property type="match status" value="1"/>
</dbReference>
<dbReference type="SUPFAM" id="SSF110942">
    <property type="entry name" value="HSP90 C-terminal domain"/>
    <property type="match status" value="1"/>
</dbReference>
<dbReference type="SUPFAM" id="SSF54211">
    <property type="entry name" value="Ribosomal protein S5 domain 2-like"/>
    <property type="match status" value="1"/>
</dbReference>
<dbReference type="PROSITE" id="PS00298">
    <property type="entry name" value="HSP90"/>
    <property type="match status" value="1"/>
</dbReference>
<feature type="chain" id="PRO_1000014942" description="Chaperone protein HtpG">
    <location>
        <begin position="1"/>
        <end position="633"/>
    </location>
</feature>
<feature type="region of interest" description="A; substrate-binding" evidence="1">
    <location>
        <begin position="1"/>
        <end position="341"/>
    </location>
</feature>
<feature type="region of interest" description="B" evidence="1">
    <location>
        <begin position="342"/>
        <end position="562"/>
    </location>
</feature>
<feature type="region of interest" description="C" evidence="1">
    <location>
        <begin position="563"/>
        <end position="633"/>
    </location>
</feature>